<proteinExistence type="inferred from homology"/>
<dbReference type="EMBL" id="CP000557">
    <property type="protein sequence ID" value="ABO65843.1"/>
    <property type="status" value="ALT_INIT"/>
    <property type="molecule type" value="Genomic_DNA"/>
</dbReference>
<dbReference type="RefSeq" id="WP_008881563.1">
    <property type="nucleotide sequence ID" value="NC_009328.1"/>
</dbReference>
<dbReference type="SMR" id="A4IKI9"/>
<dbReference type="GeneID" id="87621934"/>
<dbReference type="KEGG" id="gtn:GTNG_0461"/>
<dbReference type="eggNOG" id="ENOG5033JD2">
    <property type="taxonomic scope" value="Bacteria"/>
</dbReference>
<dbReference type="HOGENOM" id="CLU_2464662_0_0_9"/>
<dbReference type="Proteomes" id="UP000001578">
    <property type="component" value="Chromosome"/>
</dbReference>
<dbReference type="GO" id="GO:0042601">
    <property type="term" value="C:endospore-forming forespore"/>
    <property type="evidence" value="ECO:0007669"/>
    <property type="project" value="InterPro"/>
</dbReference>
<dbReference type="GO" id="GO:0030436">
    <property type="term" value="P:asexual sporulation"/>
    <property type="evidence" value="ECO:0007669"/>
    <property type="project" value="UniProtKB-UniRule"/>
</dbReference>
<dbReference type="GO" id="GO:0030435">
    <property type="term" value="P:sporulation resulting in formation of a cellular spore"/>
    <property type="evidence" value="ECO:0007669"/>
    <property type="project" value="UniProtKB-KW"/>
</dbReference>
<dbReference type="HAMAP" id="MF_01504">
    <property type="entry name" value="SspK"/>
    <property type="match status" value="1"/>
</dbReference>
<dbReference type="InterPro" id="IPR012611">
    <property type="entry name" value="SASP_SspK"/>
</dbReference>
<dbReference type="NCBIfam" id="NF002843">
    <property type="entry name" value="PRK03081.1"/>
    <property type="match status" value="1"/>
</dbReference>
<dbReference type="NCBIfam" id="TIGR03091">
    <property type="entry name" value="SASP_sspK"/>
    <property type="match status" value="1"/>
</dbReference>
<dbReference type="Pfam" id="PF08176">
    <property type="entry name" value="SspK"/>
    <property type="match status" value="1"/>
</dbReference>
<sequence>MRNKEHNFPNQNNNKFEGEPRAKSEYASKRADGTTNTHPQERMRASGERSDFF</sequence>
<reference key="1">
    <citation type="journal article" date="2007" name="Proc. Natl. Acad. Sci. U.S.A.">
        <title>Genome and proteome of long-chain alkane degrading Geobacillus thermodenitrificans NG80-2 isolated from a deep-subsurface oil reservoir.</title>
        <authorList>
            <person name="Feng L."/>
            <person name="Wang W."/>
            <person name="Cheng J."/>
            <person name="Ren Y."/>
            <person name="Zhao G."/>
            <person name="Gao C."/>
            <person name="Tang Y."/>
            <person name="Liu X."/>
            <person name="Han W."/>
            <person name="Peng X."/>
            <person name="Liu R."/>
            <person name="Wang L."/>
        </authorList>
    </citation>
    <scope>NUCLEOTIDE SEQUENCE [LARGE SCALE GENOMIC DNA]</scope>
    <source>
        <strain>NG80-2</strain>
    </source>
</reference>
<gene>
    <name evidence="1" type="primary">sspK</name>
    <name type="ordered locus">GTNG_0461</name>
</gene>
<accession>A4IKI9</accession>
<evidence type="ECO:0000255" key="1">
    <source>
        <dbReference type="HAMAP-Rule" id="MF_01504"/>
    </source>
</evidence>
<evidence type="ECO:0000256" key="2">
    <source>
        <dbReference type="SAM" id="MobiDB-lite"/>
    </source>
</evidence>
<evidence type="ECO:0000305" key="3"/>
<name>SSPK_GEOTN</name>
<comment type="subcellular location">
    <subcellularLocation>
        <location evidence="1">Spore core</location>
    </subcellularLocation>
</comment>
<comment type="induction">
    <text evidence="1">Expressed only in the forespore compartment of sporulating cells.</text>
</comment>
<comment type="similarity">
    <text evidence="1">Belongs to the SspK family.</text>
</comment>
<comment type="sequence caution" evidence="3">
    <conflict type="erroneous initiation">
        <sequence resource="EMBL-CDS" id="ABO65843"/>
    </conflict>
</comment>
<organism>
    <name type="scientific">Geobacillus thermodenitrificans (strain NG80-2)</name>
    <dbReference type="NCBI Taxonomy" id="420246"/>
    <lineage>
        <taxon>Bacteria</taxon>
        <taxon>Bacillati</taxon>
        <taxon>Bacillota</taxon>
        <taxon>Bacilli</taxon>
        <taxon>Bacillales</taxon>
        <taxon>Anoxybacillaceae</taxon>
        <taxon>Geobacillus</taxon>
    </lineage>
</organism>
<feature type="chain" id="PRO_0000296634" description="Small, acid-soluble spore protein K">
    <location>
        <begin position="1"/>
        <end position="53"/>
    </location>
</feature>
<feature type="region of interest" description="Disordered" evidence="2">
    <location>
        <begin position="1"/>
        <end position="53"/>
    </location>
</feature>
<feature type="compositionally biased region" description="Basic and acidic residues" evidence="2">
    <location>
        <begin position="16"/>
        <end position="32"/>
    </location>
</feature>
<feature type="compositionally biased region" description="Basic and acidic residues" evidence="2">
    <location>
        <begin position="39"/>
        <end position="53"/>
    </location>
</feature>
<keyword id="KW-0749">Sporulation</keyword>
<protein>
    <recommendedName>
        <fullName evidence="1">Small, acid-soluble spore protein K</fullName>
        <shortName evidence="1">SASP K</shortName>
    </recommendedName>
</protein>